<organism>
    <name type="scientific">Porphyra purpurea</name>
    <name type="common">Red seaweed</name>
    <name type="synonym">Ulva purpurea</name>
    <dbReference type="NCBI Taxonomy" id="2787"/>
    <lineage>
        <taxon>Eukaryota</taxon>
        <taxon>Rhodophyta</taxon>
        <taxon>Bangiophyceae</taxon>
        <taxon>Bangiales</taxon>
        <taxon>Bangiaceae</taxon>
        <taxon>Porphyra</taxon>
    </lineage>
</organism>
<comment type="function">
    <text evidence="1">Binds to the 23S rRNA.</text>
</comment>
<comment type="subcellular location">
    <subcellularLocation>
        <location>Plastid</location>
        <location>Chloroplast</location>
    </subcellularLocation>
</comment>
<comment type="similarity">
    <text evidence="1">Belongs to the bacterial ribosomal protein bL9 family.</text>
</comment>
<gene>
    <name evidence="1" type="primary">rpl9</name>
</gene>
<keyword id="KW-0150">Chloroplast</keyword>
<keyword id="KW-0934">Plastid</keyword>
<keyword id="KW-0687">Ribonucleoprotein</keyword>
<keyword id="KW-0689">Ribosomal protein</keyword>
<keyword id="KW-0694">RNA-binding</keyword>
<keyword id="KW-0699">rRNA-binding</keyword>
<proteinExistence type="inferred from homology"/>
<sequence>MSKKIIQVVLKENIQKLGKSNDVVKVATGYARNFLIPNKMASVATVGMLNQQKLYAAIKEKKIIFAKENARKTQQLLEEIQKFSISKKTGDGETIFGSVTEKEISQIIKNTTNVDIDKQNILIPEIKTIGLYNIEIKLFNQVTANIQLQVLPESN</sequence>
<dbReference type="EMBL" id="U38804">
    <property type="protein sequence ID" value="AAC08220.1"/>
    <property type="molecule type" value="Genomic_DNA"/>
</dbReference>
<dbReference type="PIR" id="S73255">
    <property type="entry name" value="S73255"/>
</dbReference>
<dbReference type="RefSeq" id="NP_053944.1">
    <property type="nucleotide sequence ID" value="NC_000925.1"/>
</dbReference>
<dbReference type="SMR" id="P51334"/>
<dbReference type="GeneID" id="809969"/>
<dbReference type="GO" id="GO:0009507">
    <property type="term" value="C:chloroplast"/>
    <property type="evidence" value="ECO:0007669"/>
    <property type="project" value="UniProtKB-SubCell"/>
</dbReference>
<dbReference type="GO" id="GO:1990904">
    <property type="term" value="C:ribonucleoprotein complex"/>
    <property type="evidence" value="ECO:0007669"/>
    <property type="project" value="UniProtKB-KW"/>
</dbReference>
<dbReference type="GO" id="GO:0005840">
    <property type="term" value="C:ribosome"/>
    <property type="evidence" value="ECO:0007669"/>
    <property type="project" value="UniProtKB-KW"/>
</dbReference>
<dbReference type="GO" id="GO:0019843">
    <property type="term" value="F:rRNA binding"/>
    <property type="evidence" value="ECO:0007669"/>
    <property type="project" value="UniProtKB-UniRule"/>
</dbReference>
<dbReference type="GO" id="GO:0003735">
    <property type="term" value="F:structural constituent of ribosome"/>
    <property type="evidence" value="ECO:0007669"/>
    <property type="project" value="InterPro"/>
</dbReference>
<dbReference type="GO" id="GO:0006412">
    <property type="term" value="P:translation"/>
    <property type="evidence" value="ECO:0007669"/>
    <property type="project" value="UniProtKB-UniRule"/>
</dbReference>
<dbReference type="Gene3D" id="3.10.430.100">
    <property type="entry name" value="Ribosomal protein L9, C-terminal domain"/>
    <property type="match status" value="1"/>
</dbReference>
<dbReference type="Gene3D" id="3.40.5.10">
    <property type="entry name" value="Ribosomal protein L9, N-terminal domain"/>
    <property type="match status" value="1"/>
</dbReference>
<dbReference type="HAMAP" id="MF_00503">
    <property type="entry name" value="Ribosomal_bL9"/>
    <property type="match status" value="1"/>
</dbReference>
<dbReference type="InterPro" id="IPR000244">
    <property type="entry name" value="Ribosomal_bL9"/>
</dbReference>
<dbReference type="InterPro" id="IPR009027">
    <property type="entry name" value="Ribosomal_bL9/RNase_H1_N"/>
</dbReference>
<dbReference type="InterPro" id="IPR020594">
    <property type="entry name" value="Ribosomal_bL9_bac/chp"/>
</dbReference>
<dbReference type="InterPro" id="IPR020069">
    <property type="entry name" value="Ribosomal_bL9_C"/>
</dbReference>
<dbReference type="InterPro" id="IPR036791">
    <property type="entry name" value="Ribosomal_bL9_C_sf"/>
</dbReference>
<dbReference type="InterPro" id="IPR020070">
    <property type="entry name" value="Ribosomal_bL9_N"/>
</dbReference>
<dbReference type="InterPro" id="IPR036935">
    <property type="entry name" value="Ribosomal_bL9_N_sf"/>
</dbReference>
<dbReference type="NCBIfam" id="TIGR00158">
    <property type="entry name" value="L9"/>
    <property type="match status" value="1"/>
</dbReference>
<dbReference type="PANTHER" id="PTHR21368">
    <property type="entry name" value="50S RIBOSOMAL PROTEIN L9"/>
    <property type="match status" value="1"/>
</dbReference>
<dbReference type="Pfam" id="PF03948">
    <property type="entry name" value="Ribosomal_L9_C"/>
    <property type="match status" value="1"/>
</dbReference>
<dbReference type="Pfam" id="PF01281">
    <property type="entry name" value="Ribosomal_L9_N"/>
    <property type="match status" value="1"/>
</dbReference>
<dbReference type="SUPFAM" id="SSF55658">
    <property type="entry name" value="L9 N-domain-like"/>
    <property type="match status" value="1"/>
</dbReference>
<dbReference type="SUPFAM" id="SSF55653">
    <property type="entry name" value="Ribosomal protein L9 C-domain"/>
    <property type="match status" value="1"/>
</dbReference>
<dbReference type="PROSITE" id="PS00651">
    <property type="entry name" value="RIBOSOMAL_L9"/>
    <property type="match status" value="1"/>
</dbReference>
<feature type="chain" id="PRO_0000176711" description="Large ribosomal subunit protein bL9c">
    <location>
        <begin position="1"/>
        <end position="155"/>
    </location>
</feature>
<protein>
    <recommendedName>
        <fullName evidence="1">Large ribosomal subunit protein bL9c</fullName>
    </recommendedName>
    <alternativeName>
        <fullName evidence="2">50S ribosomal protein L9, chloroplastic</fullName>
    </alternativeName>
</protein>
<geneLocation type="chloroplast"/>
<accession>P51334</accession>
<evidence type="ECO:0000255" key="1">
    <source>
        <dbReference type="HAMAP-Rule" id="MF_00503"/>
    </source>
</evidence>
<evidence type="ECO:0000305" key="2"/>
<reference key="1">
    <citation type="journal article" date="1995" name="Plant Mol. Biol. Rep.">
        <title>Complete nucleotide sequence of the Porphyra purpurea chloroplast genome.</title>
        <authorList>
            <person name="Reith M.E."/>
            <person name="Munholland J."/>
        </authorList>
    </citation>
    <scope>NUCLEOTIDE SEQUENCE [LARGE SCALE GENOMIC DNA]</scope>
    <source>
        <strain>Avonport</strain>
    </source>
</reference>
<name>RK9_PORPU</name>